<accession>Q9BKU4</accession>
<keyword id="KW-0175">Coiled coil</keyword>
<keyword id="KW-0472">Membrane</keyword>
<keyword id="KW-0496">Mitochondrion</keyword>
<keyword id="KW-0999">Mitochondrion inner membrane</keyword>
<keyword id="KW-1185">Reference proteome</keyword>
<reference key="1">
    <citation type="journal article" date="1998" name="Science">
        <title>Genome sequence of the nematode C. elegans: a platform for investigating biology.</title>
        <authorList>
            <consortium name="The C. elegans sequencing consortium"/>
        </authorList>
    </citation>
    <scope>NUCLEOTIDE SEQUENCE [LARGE SCALE GENOMIC DNA]</scope>
    <source>
        <strain>Bristol N2</strain>
    </source>
</reference>
<reference key="2">
    <citation type="journal article" date="2003" name="J. Biol. Chem.">
        <title>The mitochondrial prohibitin complex is essential for embryonic viability and germline function in Caenorhabditis elegans.</title>
        <authorList>
            <person name="Artal-Sanz M."/>
            <person name="Tsang W.Y."/>
            <person name="Willems E.M."/>
            <person name="Grivell L.A."/>
            <person name="Lemire B.D."/>
            <person name="van der Spek H."/>
            <person name="Nijtmans L.G."/>
            <person name="Sanz M.A."/>
        </authorList>
    </citation>
    <scope>FUNCTION</scope>
    <scope>SUBUNIT</scope>
    <scope>SUBCELLULAR LOCATION</scope>
</reference>
<organism>
    <name type="scientific">Caenorhabditis elegans</name>
    <dbReference type="NCBI Taxonomy" id="6239"/>
    <lineage>
        <taxon>Eukaryota</taxon>
        <taxon>Metazoa</taxon>
        <taxon>Ecdysozoa</taxon>
        <taxon>Nematoda</taxon>
        <taxon>Chromadorea</taxon>
        <taxon>Rhabditida</taxon>
        <taxon>Rhabditina</taxon>
        <taxon>Rhabditomorpha</taxon>
        <taxon>Rhabditoidea</taxon>
        <taxon>Rhabditidae</taxon>
        <taxon>Peloderinae</taxon>
        <taxon>Caenorhabditis</taxon>
    </lineage>
</organism>
<comment type="function">
    <text evidence="2">PHB proteins are essential during embryonic development and are required for somatic and germline differentiation in the larval gonad. A deficiency in PHB proteins results in altered mitochondrial biogenesis in body wall muscle cells.</text>
</comment>
<comment type="subunit">
    <text evidence="2">High molecular weight complex that consist of phb-1 and phb-2.</text>
</comment>
<comment type="subcellular location">
    <subcellularLocation>
        <location evidence="2">Mitochondrion inner membrane</location>
    </subcellularLocation>
</comment>
<comment type="similarity">
    <text evidence="3">Belongs to the prohibitin family.</text>
</comment>
<dbReference type="EMBL" id="FO081769">
    <property type="protein sequence ID" value="CCD73430.1"/>
    <property type="molecule type" value="Genomic_DNA"/>
</dbReference>
<dbReference type="RefSeq" id="NP_490929.1">
    <property type="nucleotide sequence ID" value="NM_058528.7"/>
</dbReference>
<dbReference type="SMR" id="Q9BKU4"/>
<dbReference type="BioGRID" id="37255">
    <property type="interactions" value="20"/>
</dbReference>
<dbReference type="ComplexPortal" id="CPX-4114">
    <property type="entry name" value="Prohibitin complex"/>
</dbReference>
<dbReference type="FunCoup" id="Q9BKU4">
    <property type="interactions" value="2355"/>
</dbReference>
<dbReference type="IntAct" id="Q9BKU4">
    <property type="interactions" value="1"/>
</dbReference>
<dbReference type="STRING" id="6239.Y37E3.9.1"/>
<dbReference type="PaxDb" id="6239-Y37E3.9"/>
<dbReference type="PeptideAtlas" id="Q9BKU4"/>
<dbReference type="EnsemblMetazoa" id="Y37E3.9.1">
    <property type="protein sequence ID" value="Y37E3.9.1"/>
    <property type="gene ID" value="WBGene00004014"/>
</dbReference>
<dbReference type="GeneID" id="171768"/>
<dbReference type="KEGG" id="cel:CELE_Y37E3.9"/>
<dbReference type="UCSC" id="Y37E3.9">
    <property type="organism name" value="c. elegans"/>
</dbReference>
<dbReference type="AGR" id="WB:WBGene00004014"/>
<dbReference type="CTD" id="171768"/>
<dbReference type="WormBase" id="Y37E3.9">
    <property type="protein sequence ID" value="CE26775"/>
    <property type="gene ID" value="WBGene00004014"/>
    <property type="gene designation" value="phb-1"/>
</dbReference>
<dbReference type="eggNOG" id="KOG3083">
    <property type="taxonomic scope" value="Eukaryota"/>
</dbReference>
<dbReference type="GeneTree" id="ENSGT00950000183070"/>
<dbReference type="HOGENOM" id="CLU_047969_0_0_1"/>
<dbReference type="InParanoid" id="Q9BKU4"/>
<dbReference type="OMA" id="YEFRLVT"/>
<dbReference type="OrthoDB" id="275637at2759"/>
<dbReference type="PhylomeDB" id="Q9BKU4"/>
<dbReference type="Reactome" id="R-CEL-5673000">
    <property type="pathway name" value="RAF activation"/>
</dbReference>
<dbReference type="Reactome" id="R-CEL-8949664">
    <property type="pathway name" value="Processing of SMDT1"/>
</dbReference>
<dbReference type="PRO" id="PR:Q9BKU4"/>
<dbReference type="Proteomes" id="UP000001940">
    <property type="component" value="Chromosome I"/>
</dbReference>
<dbReference type="Bgee" id="WBGene00004014">
    <property type="expression patterns" value="Expressed in pharyngeal muscle cell (C elegans) and 4 other cell types or tissues"/>
</dbReference>
<dbReference type="GO" id="GO:0005743">
    <property type="term" value="C:mitochondrial inner membrane"/>
    <property type="evidence" value="ECO:0000314"/>
    <property type="project" value="ComplexPortal"/>
</dbReference>
<dbReference type="GO" id="GO:0031966">
    <property type="term" value="C:mitochondrial membrane"/>
    <property type="evidence" value="ECO:0000314"/>
    <property type="project" value="WormBase"/>
</dbReference>
<dbReference type="GO" id="GO:0035632">
    <property type="term" value="C:mitochondrial prohibitin complex"/>
    <property type="evidence" value="ECO:0000314"/>
    <property type="project" value="ComplexPortal"/>
</dbReference>
<dbReference type="GO" id="GO:0005739">
    <property type="term" value="C:mitochondrion"/>
    <property type="evidence" value="ECO:0000318"/>
    <property type="project" value="GO_Central"/>
</dbReference>
<dbReference type="GO" id="GO:0030421">
    <property type="term" value="P:defecation"/>
    <property type="evidence" value="ECO:0000315"/>
    <property type="project" value="WormBase"/>
</dbReference>
<dbReference type="GO" id="GO:0009792">
    <property type="term" value="P:embryo development ending in birth or egg hatching"/>
    <property type="evidence" value="ECO:0000315"/>
    <property type="project" value="WormBase"/>
</dbReference>
<dbReference type="GO" id="GO:0008406">
    <property type="term" value="P:gonad development"/>
    <property type="evidence" value="ECO:0000315"/>
    <property type="project" value="WormBase"/>
</dbReference>
<dbReference type="GO" id="GO:0007005">
    <property type="term" value="P:mitochondrion organization"/>
    <property type="evidence" value="ECO:0000315"/>
    <property type="project" value="WormBase"/>
</dbReference>
<dbReference type="GO" id="GO:0048477">
    <property type="term" value="P:oogenesis"/>
    <property type="evidence" value="ECO:0000315"/>
    <property type="project" value="WormBase"/>
</dbReference>
<dbReference type="GO" id="GO:0040018">
    <property type="term" value="P:positive regulation of multicellular organism growth"/>
    <property type="evidence" value="ECO:0000315"/>
    <property type="project" value="WormBase"/>
</dbReference>
<dbReference type="GO" id="GO:0050821">
    <property type="term" value="P:protein stabilization"/>
    <property type="evidence" value="ECO:0000303"/>
    <property type="project" value="ComplexPortal"/>
</dbReference>
<dbReference type="GO" id="GO:0043051">
    <property type="term" value="P:regulation of nematode pharyngeal pumping"/>
    <property type="evidence" value="ECO:0000315"/>
    <property type="project" value="WormBase"/>
</dbReference>
<dbReference type="GO" id="GO:0002082">
    <property type="term" value="P:regulation of oxidative phosphorylation"/>
    <property type="evidence" value="ECO:0000315"/>
    <property type="project" value="WormBase"/>
</dbReference>
<dbReference type="GO" id="GO:0006979">
    <property type="term" value="P:response to oxidative stress"/>
    <property type="evidence" value="ECO:0000315"/>
    <property type="project" value="WormBase"/>
</dbReference>
<dbReference type="GO" id="GO:0007283">
    <property type="term" value="P:spermatogenesis"/>
    <property type="evidence" value="ECO:0000315"/>
    <property type="project" value="WormBase"/>
</dbReference>
<dbReference type="CDD" id="cd03401">
    <property type="entry name" value="SPFH_prohibitin"/>
    <property type="match status" value="1"/>
</dbReference>
<dbReference type="FunFam" id="3.30.479.30:FF:000001">
    <property type="entry name" value="Prohibitin 2"/>
    <property type="match status" value="1"/>
</dbReference>
<dbReference type="Gene3D" id="3.30.479.30">
    <property type="entry name" value="Band 7 domain"/>
    <property type="match status" value="1"/>
</dbReference>
<dbReference type="InterPro" id="IPR001107">
    <property type="entry name" value="Band_7"/>
</dbReference>
<dbReference type="InterPro" id="IPR036013">
    <property type="entry name" value="Band_7/SPFH_dom_sf"/>
</dbReference>
<dbReference type="InterPro" id="IPR000163">
    <property type="entry name" value="Prohibitin"/>
</dbReference>
<dbReference type="PANTHER" id="PTHR23222">
    <property type="entry name" value="PROHIBITIN"/>
    <property type="match status" value="1"/>
</dbReference>
<dbReference type="PANTHER" id="PTHR23222:SF0">
    <property type="entry name" value="PROHIBITIN 1"/>
    <property type="match status" value="1"/>
</dbReference>
<dbReference type="Pfam" id="PF01145">
    <property type="entry name" value="Band_7"/>
    <property type="match status" value="1"/>
</dbReference>
<dbReference type="PRINTS" id="PR00679">
    <property type="entry name" value="PROHIBITIN"/>
</dbReference>
<dbReference type="SMART" id="SM00244">
    <property type="entry name" value="PHB"/>
    <property type="match status" value="1"/>
</dbReference>
<dbReference type="SUPFAM" id="SSF117892">
    <property type="entry name" value="Band 7/SPFH domain"/>
    <property type="match status" value="1"/>
</dbReference>
<proteinExistence type="evidence at protein level"/>
<sequence length="275" mass="29988">MAASAQKLLGRLGTVGVGLSIAGGIAQTALYNVDGGQRAVIFDRFSGVKNEVVGEGTHFLIPWVQKPIIFDIRSTPRAVTTITGSKDLQNVNITLRILHRPSPDRLPNIYLNIGLDYAERVLPSITNEVLKAVVAQFDAHEMITQREVVSQRASVALRERAAQFGLLLDDIAITHLNFGREFTEAVEMKQVAQQEAEKARYLVEKAEQMKIAAVTTAEGDAQAAKLLAKAFASAGDGLVELRKIEAAEEIAERMAKNKNVTYLPGNQQTLLNLQS</sequence>
<gene>
    <name type="primary">phb-1</name>
    <name type="ORF">Y37E3.9</name>
</gene>
<evidence type="ECO:0000255" key="1"/>
<evidence type="ECO:0000269" key="2">
    <source>
    </source>
</evidence>
<evidence type="ECO:0000305" key="3"/>
<feature type="chain" id="PRO_0000213882" description="Mitochondrial prohibitin complex protein 1">
    <location>
        <begin position="1"/>
        <end position="275"/>
    </location>
</feature>
<feature type="coiled-coil region" evidence="1">
    <location>
        <begin position="180"/>
        <end position="213"/>
    </location>
</feature>
<name>PHB1_CAEEL</name>
<protein>
    <recommendedName>
        <fullName>Mitochondrial prohibitin complex protein 1</fullName>
        <shortName>Prohibitin-1</shortName>
    </recommendedName>
</protein>